<name>YFNF_BACSU</name>
<gene>
    <name type="primary">yfnF</name>
    <name type="ordered locus">BSU07290</name>
</gene>
<dbReference type="EMBL" id="D86418">
    <property type="protein sequence ID" value="BAA20115.1"/>
    <property type="molecule type" value="Genomic_DNA"/>
</dbReference>
<dbReference type="EMBL" id="AL009126">
    <property type="protein sequence ID" value="CAB12548.1"/>
    <property type="molecule type" value="Genomic_DNA"/>
</dbReference>
<dbReference type="PIR" id="A69815">
    <property type="entry name" value="A69815"/>
</dbReference>
<dbReference type="RefSeq" id="NP_388610.1">
    <property type="nucleotide sequence ID" value="NC_000964.3"/>
</dbReference>
<dbReference type="RefSeq" id="WP_003243130.1">
    <property type="nucleotide sequence ID" value="NZ_OZ025638.1"/>
</dbReference>
<dbReference type="FunCoup" id="O06484">
    <property type="interactions" value="55"/>
</dbReference>
<dbReference type="STRING" id="224308.BSU07290"/>
<dbReference type="PaxDb" id="224308-BSU07290"/>
<dbReference type="DNASU" id="936097"/>
<dbReference type="EnsemblBacteria" id="CAB12548">
    <property type="protein sequence ID" value="CAB12548"/>
    <property type="gene ID" value="BSU_07290"/>
</dbReference>
<dbReference type="GeneID" id="936097"/>
<dbReference type="KEGG" id="bsu:BSU07290"/>
<dbReference type="PATRIC" id="fig|224308.179.peg.791"/>
<dbReference type="eggNOG" id="COG1442">
    <property type="taxonomic scope" value="Bacteria"/>
</dbReference>
<dbReference type="InParanoid" id="O06484"/>
<dbReference type="OrthoDB" id="186344at2"/>
<dbReference type="PhylomeDB" id="O06484"/>
<dbReference type="BioCyc" id="BSUB:BSU07290-MONOMER"/>
<dbReference type="Proteomes" id="UP000001570">
    <property type="component" value="Chromosome"/>
</dbReference>
<dbReference type="Gene3D" id="3.90.550.10">
    <property type="entry name" value="Spore Coat Polysaccharide Biosynthesis Protein SpsA, Chain A"/>
    <property type="match status" value="1"/>
</dbReference>
<dbReference type="InterPro" id="IPR005069">
    <property type="entry name" value="Nucl-diP-sugar_transferase"/>
</dbReference>
<dbReference type="InterPro" id="IPR029044">
    <property type="entry name" value="Nucleotide-diphossugar_trans"/>
</dbReference>
<dbReference type="Pfam" id="PF03407">
    <property type="entry name" value="Nucleotid_trans"/>
    <property type="match status" value="1"/>
</dbReference>
<dbReference type="SUPFAM" id="SSF53448">
    <property type="entry name" value="Nucleotide-diphospho-sugar transferases"/>
    <property type="match status" value="1"/>
</dbReference>
<keyword id="KW-1185">Reference proteome</keyword>
<accession>O06484</accession>
<feature type="chain" id="PRO_0000049542" description="Uncharacterized protein YfnF">
    <location>
        <begin position="1"/>
        <end position="303"/>
    </location>
</feature>
<sequence length="303" mass="35027">MTSAYCTVLSKGRLYQAVALFKSLEQVDQDSPIFILCMDEDTHRVLQKLKMKQLNLVPVAALENELLLKLKETRDQSEYCWTMKPIFLQAVLNSNPELERVTYIDGDLFFYADPSPIFENQPDCSVLLSRGDIVIPSFEKEQIDMLQRLLGRYNSGFISFKHDDAGTDCLEWWKERCLEECKNAPGEGKFGDQGYLDYMSELFPNVCDITTPGVNIGHWNYGQHTFSWKDGRIVLEDGSPLIFYHFSGYRIVSINEIKQIHETTRTDLPFVHELYQETLPHIIQHMQTLDPEFNGFASKDDNK</sequence>
<organism>
    <name type="scientific">Bacillus subtilis (strain 168)</name>
    <dbReference type="NCBI Taxonomy" id="224308"/>
    <lineage>
        <taxon>Bacteria</taxon>
        <taxon>Bacillati</taxon>
        <taxon>Bacillota</taxon>
        <taxon>Bacilli</taxon>
        <taxon>Bacillales</taxon>
        <taxon>Bacillaceae</taxon>
        <taxon>Bacillus</taxon>
    </lineage>
</organism>
<reference key="1">
    <citation type="journal article" date="1997" name="Microbiology">
        <title>A 23.4 kb segment at the 69 degrees-70 degrees region of the Bacillus subtilis genome.</title>
        <authorList>
            <person name="Yamamoto H."/>
            <person name="Uchiyama S."/>
            <person name="Nugroho F.A."/>
            <person name="Sekiguchi J."/>
        </authorList>
    </citation>
    <scope>NUCLEOTIDE SEQUENCE [GENOMIC DNA]</scope>
    <source>
        <strain>168 / AC327</strain>
    </source>
</reference>
<reference key="2">
    <citation type="journal article" date="1997" name="Nature">
        <title>The complete genome sequence of the Gram-positive bacterium Bacillus subtilis.</title>
        <authorList>
            <person name="Kunst F."/>
            <person name="Ogasawara N."/>
            <person name="Moszer I."/>
            <person name="Albertini A.M."/>
            <person name="Alloni G."/>
            <person name="Azevedo V."/>
            <person name="Bertero M.G."/>
            <person name="Bessieres P."/>
            <person name="Bolotin A."/>
            <person name="Borchert S."/>
            <person name="Borriss R."/>
            <person name="Boursier L."/>
            <person name="Brans A."/>
            <person name="Braun M."/>
            <person name="Brignell S.C."/>
            <person name="Bron S."/>
            <person name="Brouillet S."/>
            <person name="Bruschi C.V."/>
            <person name="Caldwell B."/>
            <person name="Capuano V."/>
            <person name="Carter N.M."/>
            <person name="Choi S.-K."/>
            <person name="Codani J.-J."/>
            <person name="Connerton I.F."/>
            <person name="Cummings N.J."/>
            <person name="Daniel R.A."/>
            <person name="Denizot F."/>
            <person name="Devine K.M."/>
            <person name="Duesterhoeft A."/>
            <person name="Ehrlich S.D."/>
            <person name="Emmerson P.T."/>
            <person name="Entian K.-D."/>
            <person name="Errington J."/>
            <person name="Fabret C."/>
            <person name="Ferrari E."/>
            <person name="Foulger D."/>
            <person name="Fritz C."/>
            <person name="Fujita M."/>
            <person name="Fujita Y."/>
            <person name="Fuma S."/>
            <person name="Galizzi A."/>
            <person name="Galleron N."/>
            <person name="Ghim S.-Y."/>
            <person name="Glaser P."/>
            <person name="Goffeau A."/>
            <person name="Golightly E.J."/>
            <person name="Grandi G."/>
            <person name="Guiseppi G."/>
            <person name="Guy B.J."/>
            <person name="Haga K."/>
            <person name="Haiech J."/>
            <person name="Harwood C.R."/>
            <person name="Henaut A."/>
            <person name="Hilbert H."/>
            <person name="Holsappel S."/>
            <person name="Hosono S."/>
            <person name="Hullo M.-F."/>
            <person name="Itaya M."/>
            <person name="Jones L.-M."/>
            <person name="Joris B."/>
            <person name="Karamata D."/>
            <person name="Kasahara Y."/>
            <person name="Klaerr-Blanchard M."/>
            <person name="Klein C."/>
            <person name="Kobayashi Y."/>
            <person name="Koetter P."/>
            <person name="Koningstein G."/>
            <person name="Krogh S."/>
            <person name="Kumano M."/>
            <person name="Kurita K."/>
            <person name="Lapidus A."/>
            <person name="Lardinois S."/>
            <person name="Lauber J."/>
            <person name="Lazarevic V."/>
            <person name="Lee S.-M."/>
            <person name="Levine A."/>
            <person name="Liu H."/>
            <person name="Masuda S."/>
            <person name="Mauel C."/>
            <person name="Medigue C."/>
            <person name="Medina N."/>
            <person name="Mellado R.P."/>
            <person name="Mizuno M."/>
            <person name="Moestl D."/>
            <person name="Nakai S."/>
            <person name="Noback M."/>
            <person name="Noone D."/>
            <person name="O'Reilly M."/>
            <person name="Ogawa K."/>
            <person name="Ogiwara A."/>
            <person name="Oudega B."/>
            <person name="Park S.-H."/>
            <person name="Parro V."/>
            <person name="Pohl T.M."/>
            <person name="Portetelle D."/>
            <person name="Porwollik S."/>
            <person name="Prescott A.M."/>
            <person name="Presecan E."/>
            <person name="Pujic P."/>
            <person name="Purnelle B."/>
            <person name="Rapoport G."/>
            <person name="Rey M."/>
            <person name="Reynolds S."/>
            <person name="Rieger M."/>
            <person name="Rivolta C."/>
            <person name="Rocha E."/>
            <person name="Roche B."/>
            <person name="Rose M."/>
            <person name="Sadaie Y."/>
            <person name="Sato T."/>
            <person name="Scanlan E."/>
            <person name="Schleich S."/>
            <person name="Schroeter R."/>
            <person name="Scoffone F."/>
            <person name="Sekiguchi J."/>
            <person name="Sekowska A."/>
            <person name="Seror S.J."/>
            <person name="Serror P."/>
            <person name="Shin B.-S."/>
            <person name="Soldo B."/>
            <person name="Sorokin A."/>
            <person name="Tacconi E."/>
            <person name="Takagi T."/>
            <person name="Takahashi H."/>
            <person name="Takemaru K."/>
            <person name="Takeuchi M."/>
            <person name="Tamakoshi A."/>
            <person name="Tanaka T."/>
            <person name="Terpstra P."/>
            <person name="Tognoni A."/>
            <person name="Tosato V."/>
            <person name="Uchiyama S."/>
            <person name="Vandenbol M."/>
            <person name="Vannier F."/>
            <person name="Vassarotti A."/>
            <person name="Viari A."/>
            <person name="Wambutt R."/>
            <person name="Wedler E."/>
            <person name="Wedler H."/>
            <person name="Weitzenegger T."/>
            <person name="Winters P."/>
            <person name="Wipat A."/>
            <person name="Yamamoto H."/>
            <person name="Yamane K."/>
            <person name="Yasumoto K."/>
            <person name="Yata K."/>
            <person name="Yoshida K."/>
            <person name="Yoshikawa H.-F."/>
            <person name="Zumstein E."/>
            <person name="Yoshikawa H."/>
            <person name="Danchin A."/>
        </authorList>
    </citation>
    <scope>NUCLEOTIDE SEQUENCE [LARGE SCALE GENOMIC DNA]</scope>
    <source>
        <strain>168</strain>
    </source>
</reference>
<proteinExistence type="predicted"/>
<protein>
    <recommendedName>
        <fullName>Uncharacterized protein YfnF</fullName>
    </recommendedName>
</protein>